<protein>
    <recommendedName>
        <fullName evidence="1">ATP-dependent lipid A-core flippase</fullName>
        <ecNumber evidence="1">7.5.2.6</ecNumber>
    </recommendedName>
    <alternativeName>
        <fullName evidence="1">Lipid A export ATP-binding/permease protein MsbA</fullName>
    </alternativeName>
</protein>
<organism>
    <name type="scientific">Paraburkholderia xenovorans (strain LB400)</name>
    <dbReference type="NCBI Taxonomy" id="266265"/>
    <lineage>
        <taxon>Bacteria</taxon>
        <taxon>Pseudomonadati</taxon>
        <taxon>Pseudomonadota</taxon>
        <taxon>Betaproteobacteria</taxon>
        <taxon>Burkholderiales</taxon>
        <taxon>Burkholderiaceae</taxon>
        <taxon>Paraburkholderia</taxon>
    </lineage>
</organism>
<accession>Q142P6</accession>
<evidence type="ECO:0000255" key="1">
    <source>
        <dbReference type="HAMAP-Rule" id="MF_01703"/>
    </source>
</evidence>
<dbReference type="EC" id="7.5.2.6" evidence="1"/>
<dbReference type="EMBL" id="CP000270">
    <property type="protein sequence ID" value="ABE29693.1"/>
    <property type="molecule type" value="Genomic_DNA"/>
</dbReference>
<dbReference type="RefSeq" id="WP_011487426.1">
    <property type="nucleotide sequence ID" value="NC_007951.1"/>
</dbReference>
<dbReference type="SMR" id="Q142P6"/>
<dbReference type="STRING" id="266265.Bxe_A3290"/>
<dbReference type="KEGG" id="bxb:DR64_991"/>
<dbReference type="KEGG" id="bxe:Bxe_A3290"/>
<dbReference type="PATRIC" id="fig|266265.5.peg.1188"/>
<dbReference type="eggNOG" id="COG1132">
    <property type="taxonomic scope" value="Bacteria"/>
</dbReference>
<dbReference type="OrthoDB" id="8554730at2"/>
<dbReference type="Proteomes" id="UP000001817">
    <property type="component" value="Chromosome 1"/>
</dbReference>
<dbReference type="GO" id="GO:0005886">
    <property type="term" value="C:plasma membrane"/>
    <property type="evidence" value="ECO:0007669"/>
    <property type="project" value="UniProtKB-SubCell"/>
</dbReference>
<dbReference type="GO" id="GO:0015421">
    <property type="term" value="F:ABC-type oligopeptide transporter activity"/>
    <property type="evidence" value="ECO:0007669"/>
    <property type="project" value="TreeGrafter"/>
</dbReference>
<dbReference type="GO" id="GO:0005524">
    <property type="term" value="F:ATP binding"/>
    <property type="evidence" value="ECO:0007669"/>
    <property type="project" value="UniProtKB-KW"/>
</dbReference>
<dbReference type="GO" id="GO:0016887">
    <property type="term" value="F:ATP hydrolysis activity"/>
    <property type="evidence" value="ECO:0007669"/>
    <property type="project" value="InterPro"/>
</dbReference>
<dbReference type="GO" id="GO:0034040">
    <property type="term" value="F:ATPase-coupled lipid transmembrane transporter activity"/>
    <property type="evidence" value="ECO:0007669"/>
    <property type="project" value="InterPro"/>
</dbReference>
<dbReference type="CDD" id="cd18552">
    <property type="entry name" value="ABC_6TM_MsbA_like"/>
    <property type="match status" value="1"/>
</dbReference>
<dbReference type="FunFam" id="3.40.50.300:FF:000140">
    <property type="entry name" value="Lipid A export ATP-binding/permease protein MsbA"/>
    <property type="match status" value="1"/>
</dbReference>
<dbReference type="Gene3D" id="1.20.1560.10">
    <property type="entry name" value="ABC transporter type 1, transmembrane domain"/>
    <property type="match status" value="1"/>
</dbReference>
<dbReference type="Gene3D" id="3.40.50.300">
    <property type="entry name" value="P-loop containing nucleotide triphosphate hydrolases"/>
    <property type="match status" value="1"/>
</dbReference>
<dbReference type="InterPro" id="IPR003593">
    <property type="entry name" value="AAA+_ATPase"/>
</dbReference>
<dbReference type="InterPro" id="IPR011527">
    <property type="entry name" value="ABC1_TM_dom"/>
</dbReference>
<dbReference type="InterPro" id="IPR036640">
    <property type="entry name" value="ABC1_TM_sf"/>
</dbReference>
<dbReference type="InterPro" id="IPR003439">
    <property type="entry name" value="ABC_transporter-like_ATP-bd"/>
</dbReference>
<dbReference type="InterPro" id="IPR017871">
    <property type="entry name" value="ABC_transporter-like_CS"/>
</dbReference>
<dbReference type="InterPro" id="IPR011917">
    <property type="entry name" value="ABC_transpr_lipidA"/>
</dbReference>
<dbReference type="InterPro" id="IPR027417">
    <property type="entry name" value="P-loop_NTPase"/>
</dbReference>
<dbReference type="InterPro" id="IPR039421">
    <property type="entry name" value="Type_1_exporter"/>
</dbReference>
<dbReference type="NCBIfam" id="TIGR02203">
    <property type="entry name" value="MsbA_lipidA"/>
    <property type="match status" value="1"/>
</dbReference>
<dbReference type="PANTHER" id="PTHR43394:SF1">
    <property type="entry name" value="ATP-BINDING CASSETTE SUB-FAMILY B MEMBER 10, MITOCHONDRIAL"/>
    <property type="match status" value="1"/>
</dbReference>
<dbReference type="PANTHER" id="PTHR43394">
    <property type="entry name" value="ATP-DEPENDENT PERMEASE MDL1, MITOCHONDRIAL"/>
    <property type="match status" value="1"/>
</dbReference>
<dbReference type="Pfam" id="PF00664">
    <property type="entry name" value="ABC_membrane"/>
    <property type="match status" value="1"/>
</dbReference>
<dbReference type="Pfam" id="PF00005">
    <property type="entry name" value="ABC_tran"/>
    <property type="match status" value="1"/>
</dbReference>
<dbReference type="SMART" id="SM00382">
    <property type="entry name" value="AAA"/>
    <property type="match status" value="1"/>
</dbReference>
<dbReference type="SUPFAM" id="SSF90123">
    <property type="entry name" value="ABC transporter transmembrane region"/>
    <property type="match status" value="1"/>
</dbReference>
<dbReference type="SUPFAM" id="SSF52540">
    <property type="entry name" value="P-loop containing nucleoside triphosphate hydrolases"/>
    <property type="match status" value="1"/>
</dbReference>
<dbReference type="PROSITE" id="PS50929">
    <property type="entry name" value="ABC_TM1F"/>
    <property type="match status" value="1"/>
</dbReference>
<dbReference type="PROSITE" id="PS00211">
    <property type="entry name" value="ABC_TRANSPORTER_1"/>
    <property type="match status" value="1"/>
</dbReference>
<dbReference type="PROSITE" id="PS50893">
    <property type="entry name" value="ABC_TRANSPORTER_2"/>
    <property type="match status" value="1"/>
</dbReference>
<dbReference type="PROSITE" id="PS51239">
    <property type="entry name" value="MSBA"/>
    <property type="match status" value="1"/>
</dbReference>
<proteinExistence type="inferred from homology"/>
<sequence length="597" mass="65220">MSAKPTLSKPIGSGEASSPAVVFRRLWPYIKPLIWVLIGAIVAMAVSAATDAAIPALLKPLLDKGFGAHANDRAKWFVPAAVIGLALIRSLSQYASGYLLAYVTNKILLDLRLKMFDRMIHTSVAFFQRETASTVINAIVFEVNQILNVLLSVLVTLVRDSLTVVFLLGYLFYLNWRLTLIVAVLLPAIGWLVGKINRRLRRLNREHQLLTNELSYIVEESVGGYKVVKVHNGEQYEMDRFESMSKRLRGYAMRMTVSGGLAQPLTQFLASIALAVVITIAVVQSSSDQTTVGGFVAFVTSMLLIISPLKHLMDVNQPLQRGMTACEMIFGLIDEPSEPEGGGKPLERAHGAVEFRDVSFVYSGNATHNRHTLDQISFRVAPGEMIALAGPSGSGKTTLVNLLPRFFDPTGGQILVDGVAIPEYDLHALRSQIAMVSQDVVLFNDTVANNVAYGQTADAGKVKAALRAANLWDTVEAMPKGIETLVGDNGMMLSGGQRQRLAIARAIYKDAPILILDEATSALDSESERHVQAALETLMKGRTTLVIAHRLSTIERADRILVMEAGRIVESGSHRELLAQDGLYAHLHRIQFQQSAA</sequence>
<gene>
    <name evidence="1" type="primary">msbA</name>
    <name type="ordered locus">Bxeno_A1155</name>
    <name type="ORF">Bxe_A3290</name>
</gene>
<reference key="1">
    <citation type="journal article" date="2006" name="Proc. Natl. Acad. Sci. U.S.A.">
        <title>Burkholderia xenovorans LB400 harbors a multi-replicon, 9.73-Mbp genome shaped for versatility.</title>
        <authorList>
            <person name="Chain P.S.G."/>
            <person name="Denef V.J."/>
            <person name="Konstantinidis K.T."/>
            <person name="Vergez L.M."/>
            <person name="Agullo L."/>
            <person name="Reyes V.L."/>
            <person name="Hauser L."/>
            <person name="Cordova M."/>
            <person name="Gomez L."/>
            <person name="Gonzalez M."/>
            <person name="Land M."/>
            <person name="Lao V."/>
            <person name="Larimer F."/>
            <person name="LiPuma J.J."/>
            <person name="Mahenthiralingam E."/>
            <person name="Malfatti S.A."/>
            <person name="Marx C.J."/>
            <person name="Parnell J.J."/>
            <person name="Ramette A."/>
            <person name="Richardson P."/>
            <person name="Seeger M."/>
            <person name="Smith D."/>
            <person name="Spilker T."/>
            <person name="Sul W.J."/>
            <person name="Tsoi T.V."/>
            <person name="Ulrich L.E."/>
            <person name="Zhulin I.B."/>
            <person name="Tiedje J.M."/>
        </authorList>
    </citation>
    <scope>NUCLEOTIDE SEQUENCE [LARGE SCALE GENOMIC DNA]</scope>
    <source>
        <strain>LB400</strain>
    </source>
</reference>
<keyword id="KW-0067">ATP-binding</keyword>
<keyword id="KW-0997">Cell inner membrane</keyword>
<keyword id="KW-1003">Cell membrane</keyword>
<keyword id="KW-0445">Lipid transport</keyword>
<keyword id="KW-0472">Membrane</keyword>
<keyword id="KW-0547">Nucleotide-binding</keyword>
<keyword id="KW-1185">Reference proteome</keyword>
<keyword id="KW-1278">Translocase</keyword>
<keyword id="KW-0812">Transmembrane</keyword>
<keyword id="KW-1133">Transmembrane helix</keyword>
<keyword id="KW-0813">Transport</keyword>
<feature type="chain" id="PRO_0000271620" description="ATP-dependent lipid A-core flippase">
    <location>
        <begin position="1"/>
        <end position="597"/>
    </location>
</feature>
<feature type="transmembrane region" description="Helical" evidence="1">
    <location>
        <begin position="26"/>
        <end position="46"/>
    </location>
</feature>
<feature type="transmembrane region" description="Helical" evidence="1">
    <location>
        <begin position="76"/>
        <end position="96"/>
    </location>
</feature>
<feature type="transmembrane region" description="Helical" evidence="1">
    <location>
        <begin position="138"/>
        <end position="158"/>
    </location>
</feature>
<feature type="transmembrane region" description="Helical" evidence="1">
    <location>
        <begin position="164"/>
        <end position="184"/>
    </location>
</feature>
<feature type="transmembrane region" description="Helical" evidence="1">
    <location>
        <begin position="263"/>
        <end position="283"/>
    </location>
</feature>
<feature type="transmembrane region" description="Helical" evidence="1">
    <location>
        <begin position="292"/>
        <end position="312"/>
    </location>
</feature>
<feature type="domain" description="ABC transmembrane type-1" evidence="1">
    <location>
        <begin position="38"/>
        <end position="321"/>
    </location>
</feature>
<feature type="domain" description="ABC transporter" evidence="1">
    <location>
        <begin position="353"/>
        <end position="590"/>
    </location>
</feature>
<feature type="binding site" evidence="1">
    <location>
        <begin position="390"/>
        <end position="397"/>
    </location>
    <ligand>
        <name>ATP</name>
        <dbReference type="ChEBI" id="CHEBI:30616"/>
    </ligand>
</feature>
<comment type="function">
    <text evidence="1">Involved in lipopolysaccharide (LPS) biosynthesis. Translocates lipid A-core from the inner to the outer leaflet of the inner membrane. Transmembrane domains (TMD) form a pore in the inner membrane and the ATP-binding domain (NBD) is responsible for energy generation.</text>
</comment>
<comment type="catalytic activity">
    <reaction evidence="1">
        <text>ATP + H2O + lipid A-core oligosaccharideSide 1 = ADP + phosphate + lipid A-core oligosaccharideSide 2.</text>
        <dbReference type="EC" id="7.5.2.6"/>
    </reaction>
</comment>
<comment type="subunit">
    <text evidence="1">Homodimer.</text>
</comment>
<comment type="subcellular location">
    <subcellularLocation>
        <location evidence="1">Cell inner membrane</location>
        <topology evidence="1">Multi-pass membrane protein</topology>
    </subcellularLocation>
</comment>
<comment type="domain">
    <text evidence="1">In MsbA the ATP-binding domain (NBD) and the transmembrane domain (TMD) are fused.</text>
</comment>
<comment type="similarity">
    <text evidence="1">Belongs to the ABC transporter superfamily. Lipid exporter (TC 3.A.1.106) family.</text>
</comment>
<name>MSBA_PARXL</name>